<accession>Q7Z5J8</accession>
<accession>Q3ZCS6</accession>
<accession>Q4G0M2</accession>
<accession>Q6ZU02</accession>
<proteinExistence type="evidence at protein level"/>
<reference key="1">
    <citation type="journal article" date="2004" name="Nat. Genet.">
        <title>Complete sequencing and characterization of 21,243 full-length human cDNAs.</title>
        <authorList>
            <person name="Ota T."/>
            <person name="Suzuki Y."/>
            <person name="Nishikawa T."/>
            <person name="Otsuki T."/>
            <person name="Sugiyama T."/>
            <person name="Irie R."/>
            <person name="Wakamatsu A."/>
            <person name="Hayashi K."/>
            <person name="Sato H."/>
            <person name="Nagai K."/>
            <person name="Kimura K."/>
            <person name="Makita H."/>
            <person name="Sekine M."/>
            <person name="Obayashi M."/>
            <person name="Nishi T."/>
            <person name="Shibahara T."/>
            <person name="Tanaka T."/>
            <person name="Ishii S."/>
            <person name="Yamamoto J."/>
            <person name="Saito K."/>
            <person name="Kawai Y."/>
            <person name="Isono Y."/>
            <person name="Nakamura Y."/>
            <person name="Nagahari K."/>
            <person name="Murakami K."/>
            <person name="Yasuda T."/>
            <person name="Iwayanagi T."/>
            <person name="Wagatsuma M."/>
            <person name="Shiratori A."/>
            <person name="Sudo H."/>
            <person name="Hosoiri T."/>
            <person name="Kaku Y."/>
            <person name="Kodaira H."/>
            <person name="Kondo H."/>
            <person name="Sugawara M."/>
            <person name="Takahashi M."/>
            <person name="Kanda K."/>
            <person name="Yokoi T."/>
            <person name="Furuya T."/>
            <person name="Kikkawa E."/>
            <person name="Omura Y."/>
            <person name="Abe K."/>
            <person name="Kamihara K."/>
            <person name="Katsuta N."/>
            <person name="Sato K."/>
            <person name="Tanikawa M."/>
            <person name="Yamazaki M."/>
            <person name="Ninomiya K."/>
            <person name="Ishibashi T."/>
            <person name="Yamashita H."/>
            <person name="Murakawa K."/>
            <person name="Fujimori K."/>
            <person name="Tanai H."/>
            <person name="Kimata M."/>
            <person name="Watanabe M."/>
            <person name="Hiraoka S."/>
            <person name="Chiba Y."/>
            <person name="Ishida S."/>
            <person name="Ono Y."/>
            <person name="Takiguchi S."/>
            <person name="Watanabe S."/>
            <person name="Yosida M."/>
            <person name="Hotuta T."/>
            <person name="Kusano J."/>
            <person name="Kanehori K."/>
            <person name="Takahashi-Fujii A."/>
            <person name="Hara H."/>
            <person name="Tanase T.-O."/>
            <person name="Nomura Y."/>
            <person name="Togiya S."/>
            <person name="Komai F."/>
            <person name="Hara R."/>
            <person name="Takeuchi K."/>
            <person name="Arita M."/>
            <person name="Imose N."/>
            <person name="Musashino K."/>
            <person name="Yuuki H."/>
            <person name="Oshima A."/>
            <person name="Sasaki N."/>
            <person name="Aotsuka S."/>
            <person name="Yoshikawa Y."/>
            <person name="Matsunawa H."/>
            <person name="Ichihara T."/>
            <person name="Shiohata N."/>
            <person name="Sano S."/>
            <person name="Moriya S."/>
            <person name="Momiyama H."/>
            <person name="Satoh N."/>
            <person name="Takami S."/>
            <person name="Terashima Y."/>
            <person name="Suzuki O."/>
            <person name="Nakagawa S."/>
            <person name="Senoh A."/>
            <person name="Mizoguchi H."/>
            <person name="Goto Y."/>
            <person name="Shimizu F."/>
            <person name="Wakebe H."/>
            <person name="Hishigaki H."/>
            <person name="Watanabe T."/>
            <person name="Sugiyama A."/>
            <person name="Takemoto M."/>
            <person name="Kawakami B."/>
            <person name="Yamazaki M."/>
            <person name="Watanabe K."/>
            <person name="Kumagai A."/>
            <person name="Itakura S."/>
            <person name="Fukuzumi Y."/>
            <person name="Fujimori Y."/>
            <person name="Komiyama M."/>
            <person name="Tashiro H."/>
            <person name="Tanigami A."/>
            <person name="Fujiwara T."/>
            <person name="Ono T."/>
            <person name="Yamada K."/>
            <person name="Fujii Y."/>
            <person name="Ozaki K."/>
            <person name="Hirao M."/>
            <person name="Ohmori Y."/>
            <person name="Kawabata A."/>
            <person name="Hikiji T."/>
            <person name="Kobatake N."/>
            <person name="Inagaki H."/>
            <person name="Ikema Y."/>
            <person name="Okamoto S."/>
            <person name="Okitani R."/>
            <person name="Kawakami T."/>
            <person name="Noguchi S."/>
            <person name="Itoh T."/>
            <person name="Shigeta K."/>
            <person name="Senba T."/>
            <person name="Matsumura K."/>
            <person name="Nakajima Y."/>
            <person name="Mizuno T."/>
            <person name="Morinaga M."/>
            <person name="Sasaki M."/>
            <person name="Togashi T."/>
            <person name="Oyama M."/>
            <person name="Hata H."/>
            <person name="Watanabe M."/>
            <person name="Komatsu T."/>
            <person name="Mizushima-Sugano J."/>
            <person name="Satoh T."/>
            <person name="Shirai Y."/>
            <person name="Takahashi Y."/>
            <person name="Nakagawa K."/>
            <person name="Okumura K."/>
            <person name="Nagase T."/>
            <person name="Nomura N."/>
            <person name="Kikuchi H."/>
            <person name="Masuho Y."/>
            <person name="Yamashita R."/>
            <person name="Nakai K."/>
            <person name="Yada T."/>
            <person name="Nakamura Y."/>
            <person name="Ohara O."/>
            <person name="Isogai T."/>
            <person name="Sugano S."/>
        </authorList>
    </citation>
    <scope>NUCLEOTIDE SEQUENCE [LARGE SCALE MRNA] (ISOFORM 2)</scope>
    <source>
        <tissue>Testis</tissue>
    </source>
</reference>
<reference key="2">
    <citation type="journal article" date="2005" name="Nature">
        <title>Generation and annotation of the DNA sequences of human chromosomes 2 and 4.</title>
        <authorList>
            <person name="Hillier L.W."/>
            <person name="Graves T.A."/>
            <person name="Fulton R.S."/>
            <person name="Fulton L.A."/>
            <person name="Pepin K.H."/>
            <person name="Minx P."/>
            <person name="Wagner-McPherson C."/>
            <person name="Layman D."/>
            <person name="Wylie K."/>
            <person name="Sekhon M."/>
            <person name="Becker M.C."/>
            <person name="Fewell G.A."/>
            <person name="Delehaunty K.D."/>
            <person name="Miner T.L."/>
            <person name="Nash W.E."/>
            <person name="Kremitzki C."/>
            <person name="Oddy L."/>
            <person name="Du H."/>
            <person name="Sun H."/>
            <person name="Bradshaw-Cordum H."/>
            <person name="Ali J."/>
            <person name="Carter J."/>
            <person name="Cordes M."/>
            <person name="Harris A."/>
            <person name="Isak A."/>
            <person name="van Brunt A."/>
            <person name="Nguyen C."/>
            <person name="Du F."/>
            <person name="Courtney L."/>
            <person name="Kalicki J."/>
            <person name="Ozersky P."/>
            <person name="Abbott S."/>
            <person name="Armstrong J."/>
            <person name="Belter E.A."/>
            <person name="Caruso L."/>
            <person name="Cedroni M."/>
            <person name="Cotton M."/>
            <person name="Davidson T."/>
            <person name="Desai A."/>
            <person name="Elliott G."/>
            <person name="Erb T."/>
            <person name="Fronick C."/>
            <person name="Gaige T."/>
            <person name="Haakenson W."/>
            <person name="Haglund K."/>
            <person name="Holmes A."/>
            <person name="Harkins R."/>
            <person name="Kim K."/>
            <person name="Kruchowski S.S."/>
            <person name="Strong C.M."/>
            <person name="Grewal N."/>
            <person name="Goyea E."/>
            <person name="Hou S."/>
            <person name="Levy A."/>
            <person name="Martinka S."/>
            <person name="Mead K."/>
            <person name="McLellan M.D."/>
            <person name="Meyer R."/>
            <person name="Randall-Maher J."/>
            <person name="Tomlinson C."/>
            <person name="Dauphin-Kohlberg S."/>
            <person name="Kozlowicz-Reilly A."/>
            <person name="Shah N."/>
            <person name="Swearengen-Shahid S."/>
            <person name="Snider J."/>
            <person name="Strong J.T."/>
            <person name="Thompson J."/>
            <person name="Yoakum M."/>
            <person name="Leonard S."/>
            <person name="Pearman C."/>
            <person name="Trani L."/>
            <person name="Radionenko M."/>
            <person name="Waligorski J.E."/>
            <person name="Wang C."/>
            <person name="Rock S.M."/>
            <person name="Tin-Wollam A.-M."/>
            <person name="Maupin R."/>
            <person name="Latreille P."/>
            <person name="Wendl M.C."/>
            <person name="Yang S.-P."/>
            <person name="Pohl C."/>
            <person name="Wallis J.W."/>
            <person name="Spieth J."/>
            <person name="Bieri T.A."/>
            <person name="Berkowicz N."/>
            <person name="Nelson J.O."/>
            <person name="Osborne J."/>
            <person name="Ding L."/>
            <person name="Meyer R."/>
            <person name="Sabo A."/>
            <person name="Shotland Y."/>
            <person name="Sinha P."/>
            <person name="Wohldmann P.E."/>
            <person name="Cook L.L."/>
            <person name="Hickenbotham M.T."/>
            <person name="Eldred J."/>
            <person name="Williams D."/>
            <person name="Jones T.A."/>
            <person name="She X."/>
            <person name="Ciccarelli F.D."/>
            <person name="Izaurralde E."/>
            <person name="Taylor J."/>
            <person name="Schmutz J."/>
            <person name="Myers R.M."/>
            <person name="Cox D.R."/>
            <person name="Huang X."/>
            <person name="McPherson J.D."/>
            <person name="Mardis E.R."/>
            <person name="Clifton S.W."/>
            <person name="Warren W.C."/>
            <person name="Chinwalla A.T."/>
            <person name="Eddy S.R."/>
            <person name="Marra M.A."/>
            <person name="Ovcharenko I."/>
            <person name="Furey T.S."/>
            <person name="Miller W."/>
            <person name="Eichler E.E."/>
            <person name="Bork P."/>
            <person name="Suyama M."/>
            <person name="Torrents D."/>
            <person name="Waterston R.H."/>
            <person name="Wilson R.K."/>
        </authorList>
    </citation>
    <scope>NUCLEOTIDE SEQUENCE [LARGE SCALE GENOMIC DNA]</scope>
</reference>
<reference key="3">
    <citation type="journal article" date="2004" name="Genome Res.">
        <title>The status, quality, and expansion of the NIH full-length cDNA project: the Mammalian Gene Collection (MGC).</title>
        <authorList>
            <consortium name="The MGC Project Team"/>
        </authorList>
    </citation>
    <scope>NUCLEOTIDE SEQUENCE [LARGE SCALE MRNA] (ISOFORMS 3 AND 4)</scope>
    <source>
        <tissue>Testis</tissue>
    </source>
</reference>
<reference key="4">
    <citation type="journal article" date="2004" name="Biochem. Biophys. Res. Commun.">
        <title>Characterization of a novel human gene containing ANK repeats and ARM domains.</title>
        <authorList>
            <person name="Occhi G."/>
            <person name="Olivieri M."/>
            <person name="Rampazzo A."/>
            <person name="Danieli G.A."/>
        </authorList>
    </citation>
    <scope>NUCLEOTIDE SEQUENCE [MRNA] OF 72-1434 (ISOFORM 1)</scope>
    <scope>ALTERNATIVE SPLICING</scope>
    <scope>TISSUE SPECIFICITY</scope>
    <scope>VARIANT PHE-1077</scope>
    <source>
        <tissue>Heart</tissue>
    </source>
</reference>
<keyword id="KW-0025">Alternative splicing</keyword>
<keyword id="KW-0040">ANK repeat</keyword>
<keyword id="KW-0472">Membrane</keyword>
<keyword id="KW-1267">Proteomics identification</keyword>
<keyword id="KW-1185">Reference proteome</keyword>
<keyword id="KW-0677">Repeat</keyword>
<keyword id="KW-0812">Transmembrane</keyword>
<keyword id="KW-1133">Transmembrane helix</keyword>
<evidence type="ECO:0000255" key="1"/>
<evidence type="ECO:0000269" key="2">
    <source>
    </source>
</evidence>
<evidence type="ECO:0000303" key="3">
    <source>
    </source>
</evidence>
<evidence type="ECO:0000303" key="4">
    <source>
    </source>
</evidence>
<evidence type="ECO:0000305" key="5"/>
<name>ANKAR_HUMAN</name>
<sequence length="1434" mass="162026">MLRLPKKGLPRFEQVQDEDTYLENLAIQRNASAFFEKYDRSEIQELLTTALVSWLSAKEDVRSQVDLPCGIMSQMNNVGFSTAILLTPVDPTALLDYREVHQMIRELAIGIYCLNQIPSISLEANYDQSSSCQLPPAYYDTRIGQILINIDYMLKALWHGIYMPKEKRARFSELWRAIMDIDPDGKPQTNKDIFSEFSSAGLTDITKDPDFNEIYDEDVNEDPTYDPNSPEETAVFMKYAENIMLKLTFSTTQIQQYENVFIFETGYWLTNAIKYNQDYLDICTYQRLQQRLYLQKKIIQKHFEKKKDIRRGIGYLKLICFLIPFLLSLKKKMKVPYLSSLLQPFSDDKVKTERELPPFIYGRDFKCQNFHYKENQYFHVHGGIEFDISTPSIENALEDFQKNLEKIRDCAANTFIEDSGYKEYYSIPVMEFHGKSYYVIYFELETFYQQLYKTQWWGAINEIVNNLRLKRLPLTDAQLHEQFKKKLGFKRAMKCKSIPFGMKSAVERGLSAVFHTFSRKTSSSTINVSDEAGYTIFHHAALHNRVSIICQLCNANFKVNQRRFVTFSQGPTPLHLAAQACSLETTVCLLCSKADYTLSEKRGWMPIHFAAFYDNVCIIIALCRKDPSLLEAEATAENQCTPLLLAATSGALDTIQYLFSIGANWRKTDIKGNNIIHLSVLTFHTEVLKYIIKLNIPELPVWKTLVEMLQCESYKRRMMAVMSLEVICLANDQYWRCILDAGTIPALINLLKSSKIKLQCKTVGLLSNISTHKSAVHALVEAGGIPSLINLLVCDEPEVHSRCAVILYDIAQCENKDVIAKYNGIPSLINLLNLNIENVLVNVMNCIRVLCIGNENNQRAVREHKGLPYLIRFLSSDSDVLKAVSSAAIAEVGRDNKEIQDAIAMEGAIPPLVALFKGKQISVQMKGAMAVESLASHNALIQKAFLEKSLTKYLLKLLKAFQIDVKEQGAVALWALAGQTLKQQKYMAEQIGYSFIINMLLSPSAKMQYVGGEAVIALSKDSRMHQNQICEGNGIAPLVRLLRISTIAEGTLLSVIRAVGSICIGVAHTSNPVSQQLVVDENAFPVLIQLLRNHPSPNIKVEVAFSLACIVLGNDVLQKDLHENEGFEYADVLYLLHSTEKDICLRAGYALTLFAFNNRFQQYLILESGIMTISIFERFLESTVETEKAMAAFQIVVLAKVIRDMDHITLSARGVTILVDSLYSVQTSTIVLTGNLIASLAHSRAGIPEAFTTLGTIQRLCYHLYSGIEEVRAACSSALGYLTYNANAFRILLKECRNKPNQFIRIKNNISRDASINPAFLKEFQMQQTLVGLPSLSLEKNGGPSIIPIFKRGKEHRRKLKPKIQPKDSLTLLPPVTNFMGLFKATKKTKDSHNIFSFSSTITSDITNVSRPRIVCLNQLGKHVQKANPEPAEG</sequence>
<feature type="chain" id="PRO_0000286806" description="Ankyrin and armadillo repeat-containing protein">
    <location>
        <begin position="1"/>
        <end position="1434"/>
    </location>
</feature>
<feature type="transmembrane region" description="Helical" evidence="1">
    <location>
        <begin position="309"/>
        <end position="329"/>
    </location>
</feature>
<feature type="repeat" description="ANK 1">
    <location>
        <begin position="532"/>
        <end position="561"/>
    </location>
</feature>
<feature type="repeat" description="ANK 2">
    <location>
        <begin position="569"/>
        <end position="598"/>
    </location>
</feature>
<feature type="repeat" description="ANK 3">
    <location>
        <begin position="602"/>
        <end position="631"/>
    </location>
</feature>
<feature type="repeat" description="ANK 4">
    <location>
        <begin position="638"/>
        <end position="667"/>
    </location>
</feature>
<feature type="repeat" description="ANK 5">
    <location>
        <begin position="671"/>
        <end position="701"/>
    </location>
</feature>
<feature type="repeat" description="ARM 1">
    <location>
        <begin position="732"/>
        <end position="771"/>
    </location>
</feature>
<feature type="repeat" description="ARM 2">
    <location>
        <begin position="773"/>
        <end position="812"/>
    </location>
</feature>
<feature type="repeat" description="ARM 3">
    <location>
        <begin position="814"/>
        <end position="852"/>
    </location>
</feature>
<feature type="repeat" description="ARM 4">
    <location>
        <begin position="855"/>
        <end position="894"/>
    </location>
</feature>
<feature type="repeat" description="ARM 5">
    <location>
        <begin position="897"/>
        <end position="936"/>
    </location>
</feature>
<feature type="repeat" description="ARM 6">
    <location>
        <begin position="1072"/>
        <end position="1112"/>
    </location>
</feature>
<feature type="splice variant" id="VSP_025166" description="In isoform 4." evidence="4">
    <location>
        <begin position="1"/>
        <end position="332"/>
    </location>
</feature>
<feature type="splice variant" id="VSP_025167" description="In isoform 3." evidence="4">
    <location>
        <begin position="1"/>
        <end position="236"/>
    </location>
</feature>
<feature type="splice variant" id="VSP_025168" description="In isoform 4." evidence="4">
    <original>VEMLQCESYKR</original>
    <variation>KCYSVKAINEG</variation>
    <location>
        <begin position="706"/>
        <end position="716"/>
    </location>
</feature>
<feature type="splice variant" id="VSP_025169" description="In isoform 4." evidence="4">
    <location>
        <begin position="717"/>
        <end position="1434"/>
    </location>
</feature>
<feature type="splice variant" id="VSP_025170" description="In isoform 3." evidence="4">
    <original>S</original>
    <variation>SGLFNLFLNSFE</variation>
    <location>
        <position position="878"/>
    </location>
</feature>
<feature type="splice variant" id="VSP_025171" description="In isoform 3." evidence="4">
    <original>GEAVIALSKDSRMHQ</original>
    <variation>YLLKSRLCINTFCLQ</variation>
    <location>
        <begin position="1012"/>
        <end position="1026"/>
    </location>
</feature>
<feature type="splice variant" id="VSP_025172" description="In isoform 3." evidence="4">
    <location>
        <begin position="1027"/>
        <end position="1434"/>
    </location>
</feature>
<feature type="splice variant" id="VSP_025173" description="In isoform 2." evidence="3">
    <original>VAHTSNPVSQQLVVD</original>
    <variation>YLLKSRLCINTFCLQ</variation>
    <location>
        <begin position="1066"/>
        <end position="1080"/>
    </location>
</feature>
<feature type="splice variant" id="VSP_025174" description="In isoform 2." evidence="3">
    <location>
        <begin position="1081"/>
        <end position="1434"/>
    </location>
</feature>
<feature type="sequence variant" id="VAR_032164" description="In dbSNP:rs16831887.">
    <original>I</original>
    <variation>V</variation>
    <location>
        <position position="675"/>
    </location>
</feature>
<feature type="sequence variant" id="VAR_032165" description="In dbSNP:rs1225090." evidence="2">
    <original>L</original>
    <variation>F</variation>
    <location>
        <position position="1077"/>
    </location>
</feature>
<feature type="sequence conflict" description="In Ref. 1; BAC86425." evidence="5" ref="1">
    <original>G</original>
    <variation>R</variation>
    <location>
        <position position="8"/>
    </location>
</feature>
<feature type="sequence conflict" description="In Ref. 1; BAC86425." evidence="5" ref="1">
    <original>K</original>
    <variation>R</variation>
    <location>
        <position position="207"/>
    </location>
</feature>
<feature type="sequence conflict" description="In Ref. 3; AAH47413." evidence="5" ref="3">
    <original>S</original>
    <variation>G</variation>
    <location>
        <position position="436"/>
    </location>
</feature>
<feature type="sequence conflict" description="In Ref. 3; AAH47413." evidence="5" ref="3">
    <original>C</original>
    <variation>Y</variation>
    <location>
        <position position="623"/>
    </location>
</feature>
<feature type="sequence conflict" description="In Ref. 3; AAH47413." evidence="5" ref="3">
    <original>S</original>
    <variation>L</variation>
    <location>
        <position position="679"/>
    </location>
</feature>
<comment type="subcellular location">
    <subcellularLocation>
        <location evidence="5">Membrane</location>
        <topology evidence="5">Single-pass membrane protein</topology>
    </subcellularLocation>
</comment>
<comment type="alternative products">
    <event type="alternative splicing"/>
    <isoform>
        <id>Q7Z5J8-1</id>
        <name>1</name>
        <name>FLJ25415-2P</name>
        <sequence type="displayed"/>
    </isoform>
    <isoform>
        <id>Q7Z5J8-2</id>
        <name>2</name>
        <sequence type="described" ref="VSP_025173 VSP_025174"/>
    </isoform>
    <isoform>
        <id>Q7Z5J8-3</id>
        <name>3</name>
        <sequence type="described" ref="VSP_025167 VSP_025170 VSP_025171 VSP_025172"/>
    </isoform>
    <isoform>
        <id>Q7Z5J8-4</id>
        <name>4</name>
        <sequence type="described" ref="VSP_025166 VSP_025168 VSP_025169"/>
    </isoform>
</comment>
<comment type="tissue specificity">
    <text evidence="2">Ubiquitously expressed with highest level in pancreas and lowest in skeletal muscle.</text>
</comment>
<gene>
    <name type="primary">ANKAR</name>
</gene>
<protein>
    <recommendedName>
        <fullName>Ankyrin and armadillo repeat-containing protein</fullName>
    </recommendedName>
</protein>
<dbReference type="EMBL" id="AK126073">
    <property type="protein sequence ID" value="BAC86425.1"/>
    <property type="molecule type" value="mRNA"/>
</dbReference>
<dbReference type="EMBL" id="AC012488">
    <property type="status" value="NOT_ANNOTATED_CDS"/>
    <property type="molecule type" value="Genomic_DNA"/>
</dbReference>
<dbReference type="EMBL" id="AC013468">
    <property type="status" value="NOT_ANNOTATED_CDS"/>
    <property type="molecule type" value="Genomic_DNA"/>
</dbReference>
<dbReference type="EMBL" id="BC044907">
    <property type="protein sequence ID" value="AAH44907.1"/>
    <property type="molecule type" value="mRNA"/>
</dbReference>
<dbReference type="EMBL" id="BC047413">
    <property type="protein sequence ID" value="AAH47413.1"/>
    <property type="molecule type" value="mRNA"/>
</dbReference>
<dbReference type="EMBL" id="AJ549812">
    <property type="protein sequence ID" value="CAD71147.1"/>
    <property type="molecule type" value="mRNA"/>
</dbReference>
<dbReference type="CCDS" id="CCDS33351.2">
    <molecule id="Q7Z5J8-1"/>
</dbReference>
<dbReference type="RefSeq" id="NP_001364997.1">
    <molecule id="Q7Z5J8-1"/>
    <property type="nucleotide sequence ID" value="NM_001378068.1"/>
</dbReference>
<dbReference type="RefSeq" id="NP_653309.3">
    <molecule id="Q7Z5J8-1"/>
    <property type="nucleotide sequence ID" value="NM_144708.3"/>
</dbReference>
<dbReference type="RefSeq" id="XP_011508976.1">
    <property type="nucleotide sequence ID" value="XM_011510674.1"/>
</dbReference>
<dbReference type="RefSeq" id="XP_047299409.1">
    <molecule id="Q7Z5J8-2"/>
    <property type="nucleotide sequence ID" value="XM_047443453.1"/>
</dbReference>
<dbReference type="RefSeq" id="XP_054196654.1">
    <molecule id="Q7Z5J8-2"/>
    <property type="nucleotide sequence ID" value="XM_054340679.1"/>
</dbReference>
<dbReference type="SMR" id="Q7Z5J8"/>
<dbReference type="BioGRID" id="127319">
    <property type="interactions" value="6"/>
</dbReference>
<dbReference type="FunCoup" id="Q7Z5J8">
    <property type="interactions" value="124"/>
</dbReference>
<dbReference type="IntAct" id="Q7Z5J8">
    <property type="interactions" value="1"/>
</dbReference>
<dbReference type="STRING" id="9606.ENSP00000427882"/>
<dbReference type="GlyGen" id="Q7Z5J8">
    <property type="glycosylation" value="2 sites, 1 O-linked glycan (1 site)"/>
</dbReference>
<dbReference type="iPTMnet" id="Q7Z5J8"/>
<dbReference type="PhosphoSitePlus" id="Q7Z5J8"/>
<dbReference type="BioMuta" id="ANKAR"/>
<dbReference type="DMDM" id="308153635"/>
<dbReference type="jPOST" id="Q7Z5J8"/>
<dbReference type="MassIVE" id="Q7Z5J8"/>
<dbReference type="PaxDb" id="9606-ENSP00000427882"/>
<dbReference type="PeptideAtlas" id="Q7Z5J8"/>
<dbReference type="ProteomicsDB" id="69307">
    <molecule id="Q7Z5J8-1"/>
</dbReference>
<dbReference type="ProteomicsDB" id="69308">
    <molecule id="Q7Z5J8-2"/>
</dbReference>
<dbReference type="ProteomicsDB" id="69309">
    <molecule id="Q7Z5J8-3"/>
</dbReference>
<dbReference type="ProteomicsDB" id="69310">
    <molecule id="Q7Z5J8-4"/>
</dbReference>
<dbReference type="Antibodypedia" id="52164">
    <property type="antibodies" value="7 antibodies from 6 providers"/>
</dbReference>
<dbReference type="DNASU" id="150709"/>
<dbReference type="Ensembl" id="ENST00000313581.4">
    <molecule id="Q7Z5J8-1"/>
    <property type="protein sequence ID" value="ENSP00000313513.4"/>
    <property type="gene ID" value="ENSG00000151687.15"/>
</dbReference>
<dbReference type="Ensembl" id="ENST00000441800.5">
    <molecule id="Q7Z5J8-3"/>
    <property type="protein sequence ID" value="ENSP00000407459.1"/>
    <property type="gene ID" value="ENSG00000151687.15"/>
</dbReference>
<dbReference type="Ensembl" id="ENST00000520309.5">
    <molecule id="Q7Z5J8-1"/>
    <property type="protein sequence ID" value="ENSP00000427882.1"/>
    <property type="gene ID" value="ENSG00000151687.15"/>
</dbReference>
<dbReference type="Ensembl" id="ENST00000684021.1">
    <molecule id="Q7Z5J8-1"/>
    <property type="protein sequence ID" value="ENSP00000507233.1"/>
    <property type="gene ID" value="ENSG00000151687.15"/>
</dbReference>
<dbReference type="GeneID" id="150709"/>
<dbReference type="KEGG" id="hsa:150709"/>
<dbReference type="MANE-Select" id="ENST00000684021.1">
    <property type="protein sequence ID" value="ENSP00000507233.1"/>
    <property type="RefSeq nucleotide sequence ID" value="NM_001378068.1"/>
    <property type="RefSeq protein sequence ID" value="NP_001364997.1"/>
</dbReference>
<dbReference type="UCSC" id="uc002uqw.3">
    <molecule id="Q7Z5J8-1"/>
    <property type="organism name" value="human"/>
</dbReference>
<dbReference type="AGR" id="HGNC:26350"/>
<dbReference type="CTD" id="150709"/>
<dbReference type="DisGeNET" id="150709"/>
<dbReference type="GeneCards" id="ANKAR"/>
<dbReference type="HGNC" id="HGNC:26350">
    <property type="gene designation" value="ANKAR"/>
</dbReference>
<dbReference type="HPA" id="ENSG00000151687">
    <property type="expression patterns" value="Tissue enriched (testis)"/>
</dbReference>
<dbReference type="MIM" id="609803">
    <property type="type" value="gene"/>
</dbReference>
<dbReference type="neXtProt" id="NX_Q7Z5J8"/>
<dbReference type="OpenTargets" id="ENSG00000151687"/>
<dbReference type="PharmGKB" id="PA145149868"/>
<dbReference type="VEuPathDB" id="HostDB:ENSG00000151687"/>
<dbReference type="eggNOG" id="KOG4177">
    <property type="taxonomic scope" value="Eukaryota"/>
</dbReference>
<dbReference type="GeneTree" id="ENSGT00680000100065"/>
<dbReference type="HOGENOM" id="CLU_006481_1_0_1"/>
<dbReference type="InParanoid" id="Q7Z5J8"/>
<dbReference type="OMA" id="FMGLFKT"/>
<dbReference type="OrthoDB" id="1683831at2759"/>
<dbReference type="PAN-GO" id="Q7Z5J8">
    <property type="GO annotations" value="0 GO annotations based on evolutionary models"/>
</dbReference>
<dbReference type="PhylomeDB" id="Q7Z5J8"/>
<dbReference type="TreeFam" id="TF324155"/>
<dbReference type="PathwayCommons" id="Q7Z5J8"/>
<dbReference type="SignaLink" id="Q7Z5J8"/>
<dbReference type="BioGRID-ORCS" id="150709">
    <property type="hits" value="13 hits in 1145 CRISPR screens"/>
</dbReference>
<dbReference type="ChiTaRS" id="ANKAR">
    <property type="organism name" value="human"/>
</dbReference>
<dbReference type="GenomeRNAi" id="150709"/>
<dbReference type="Pharos" id="Q7Z5J8">
    <property type="development level" value="Tdark"/>
</dbReference>
<dbReference type="PRO" id="PR:Q7Z5J8"/>
<dbReference type="Proteomes" id="UP000005640">
    <property type="component" value="Chromosome 2"/>
</dbReference>
<dbReference type="RNAct" id="Q7Z5J8">
    <property type="molecule type" value="protein"/>
</dbReference>
<dbReference type="Bgee" id="ENSG00000151687">
    <property type="expression patterns" value="Expressed in calcaneal tendon and 101 other cell types or tissues"/>
</dbReference>
<dbReference type="ExpressionAtlas" id="Q7Z5J8">
    <property type="expression patterns" value="baseline and differential"/>
</dbReference>
<dbReference type="GO" id="GO:0016020">
    <property type="term" value="C:membrane"/>
    <property type="evidence" value="ECO:0007669"/>
    <property type="project" value="UniProtKB-SubCell"/>
</dbReference>
<dbReference type="Gene3D" id="1.25.40.20">
    <property type="entry name" value="Ankyrin repeat-containing domain"/>
    <property type="match status" value="1"/>
</dbReference>
<dbReference type="Gene3D" id="1.25.10.10">
    <property type="entry name" value="Leucine-rich Repeat Variant"/>
    <property type="match status" value="4"/>
</dbReference>
<dbReference type="InterPro" id="IPR043379">
    <property type="entry name" value="ANKAR"/>
</dbReference>
<dbReference type="InterPro" id="IPR002110">
    <property type="entry name" value="Ankyrin_rpt"/>
</dbReference>
<dbReference type="InterPro" id="IPR036770">
    <property type="entry name" value="Ankyrin_rpt-contain_sf"/>
</dbReference>
<dbReference type="InterPro" id="IPR011989">
    <property type="entry name" value="ARM-like"/>
</dbReference>
<dbReference type="InterPro" id="IPR016024">
    <property type="entry name" value="ARM-type_fold"/>
</dbReference>
<dbReference type="InterPro" id="IPR000225">
    <property type="entry name" value="Armadillo"/>
</dbReference>
<dbReference type="PANTHER" id="PTHR46464">
    <property type="entry name" value="ANK_REP_REGION DOMAIN-CONTAINING PROTEIN"/>
    <property type="match status" value="1"/>
</dbReference>
<dbReference type="PANTHER" id="PTHR46464:SF1">
    <property type="entry name" value="ANKYRIN AND ARMADILLO REPEAT-CONTAINING PROTEIN"/>
    <property type="match status" value="1"/>
</dbReference>
<dbReference type="Pfam" id="PF12796">
    <property type="entry name" value="Ank_2"/>
    <property type="match status" value="1"/>
</dbReference>
<dbReference type="Pfam" id="PF00514">
    <property type="entry name" value="Arm"/>
    <property type="match status" value="1"/>
</dbReference>
<dbReference type="SMART" id="SM00248">
    <property type="entry name" value="ANK"/>
    <property type="match status" value="5"/>
</dbReference>
<dbReference type="SMART" id="SM00185">
    <property type="entry name" value="ARM"/>
    <property type="match status" value="9"/>
</dbReference>
<dbReference type="SUPFAM" id="SSF48403">
    <property type="entry name" value="Ankyrin repeat"/>
    <property type="match status" value="1"/>
</dbReference>
<dbReference type="SUPFAM" id="SSF48371">
    <property type="entry name" value="ARM repeat"/>
    <property type="match status" value="2"/>
</dbReference>
<dbReference type="PROSITE" id="PS50297">
    <property type="entry name" value="ANK_REP_REGION"/>
    <property type="match status" value="1"/>
</dbReference>
<dbReference type="PROSITE" id="PS50088">
    <property type="entry name" value="ANK_REPEAT"/>
    <property type="match status" value="2"/>
</dbReference>
<dbReference type="PROSITE" id="PS50176">
    <property type="entry name" value="ARM_REPEAT"/>
    <property type="match status" value="1"/>
</dbReference>
<organism>
    <name type="scientific">Homo sapiens</name>
    <name type="common">Human</name>
    <dbReference type="NCBI Taxonomy" id="9606"/>
    <lineage>
        <taxon>Eukaryota</taxon>
        <taxon>Metazoa</taxon>
        <taxon>Chordata</taxon>
        <taxon>Craniata</taxon>
        <taxon>Vertebrata</taxon>
        <taxon>Euteleostomi</taxon>
        <taxon>Mammalia</taxon>
        <taxon>Eutheria</taxon>
        <taxon>Euarchontoglires</taxon>
        <taxon>Primates</taxon>
        <taxon>Haplorrhini</taxon>
        <taxon>Catarrhini</taxon>
        <taxon>Hominidae</taxon>
        <taxon>Homo</taxon>
    </lineage>
</organism>